<gene>
    <name evidence="1" type="primary">groEL</name>
    <name evidence="1" type="synonym">groL</name>
    <name type="synonym">mopA</name>
</gene>
<evidence type="ECO:0000255" key="1">
    <source>
        <dbReference type="HAMAP-Rule" id="MF_00600"/>
    </source>
</evidence>
<evidence type="ECO:0000305" key="2"/>
<name>CH60_MYCFO</name>
<proteinExistence type="inferred from homology"/>
<dbReference type="EC" id="5.6.1.7" evidence="1"/>
<dbReference type="EMBL" id="U55834">
    <property type="protein sequence ID" value="AAC44453.1"/>
    <property type="molecule type" value="Genomic_DNA"/>
</dbReference>
<dbReference type="EMBL" id="S76645">
    <property type="protein sequence ID" value="AAP31979.1"/>
    <property type="molecule type" value="Genomic_DNA"/>
</dbReference>
<dbReference type="PIR" id="S05295">
    <property type="entry name" value="S05295"/>
</dbReference>
<dbReference type="SMR" id="Q49160"/>
<dbReference type="STRING" id="1766.XA26_52750"/>
<dbReference type="GO" id="GO:0005737">
    <property type="term" value="C:cytoplasm"/>
    <property type="evidence" value="ECO:0007669"/>
    <property type="project" value="UniProtKB-SubCell"/>
</dbReference>
<dbReference type="GO" id="GO:0005524">
    <property type="term" value="F:ATP binding"/>
    <property type="evidence" value="ECO:0007669"/>
    <property type="project" value="UniProtKB-KW"/>
</dbReference>
<dbReference type="GO" id="GO:0140662">
    <property type="term" value="F:ATP-dependent protein folding chaperone"/>
    <property type="evidence" value="ECO:0007669"/>
    <property type="project" value="InterPro"/>
</dbReference>
<dbReference type="GO" id="GO:0016853">
    <property type="term" value="F:isomerase activity"/>
    <property type="evidence" value="ECO:0007669"/>
    <property type="project" value="UniProtKB-KW"/>
</dbReference>
<dbReference type="GO" id="GO:0042026">
    <property type="term" value="P:protein refolding"/>
    <property type="evidence" value="ECO:0007669"/>
    <property type="project" value="InterPro"/>
</dbReference>
<dbReference type="Gene3D" id="1.10.560.10">
    <property type="entry name" value="GroEL-like equatorial domain"/>
    <property type="match status" value="1"/>
</dbReference>
<dbReference type="Gene3D" id="3.30.260.10">
    <property type="entry name" value="TCP-1-like chaperonin intermediate domain"/>
    <property type="match status" value="1"/>
</dbReference>
<dbReference type="InterPro" id="IPR017998">
    <property type="entry name" value="Chaperone_TCP-1"/>
</dbReference>
<dbReference type="InterPro" id="IPR001844">
    <property type="entry name" value="Cpn60/GroEL"/>
</dbReference>
<dbReference type="InterPro" id="IPR002423">
    <property type="entry name" value="Cpn60/GroEL/TCP-1"/>
</dbReference>
<dbReference type="InterPro" id="IPR027413">
    <property type="entry name" value="GROEL-like_equatorial_sf"/>
</dbReference>
<dbReference type="InterPro" id="IPR027410">
    <property type="entry name" value="TCP-1-like_intermed_sf"/>
</dbReference>
<dbReference type="PANTHER" id="PTHR45633">
    <property type="entry name" value="60 KDA HEAT SHOCK PROTEIN, MITOCHONDRIAL"/>
    <property type="match status" value="1"/>
</dbReference>
<dbReference type="Pfam" id="PF00118">
    <property type="entry name" value="Cpn60_TCP1"/>
    <property type="match status" value="1"/>
</dbReference>
<dbReference type="PRINTS" id="PR00304">
    <property type="entry name" value="TCOMPLEXTCP1"/>
</dbReference>
<dbReference type="SUPFAM" id="SSF48592">
    <property type="entry name" value="GroEL equatorial domain-like"/>
    <property type="match status" value="1"/>
</dbReference>
<comment type="function">
    <text evidence="1">Together with its co-chaperonin GroES, plays an essential role in assisting protein folding. The GroEL-GroES system forms a nano-cage that allows encapsulation of the non-native substrate proteins and provides a physical environment optimized to promote and accelerate protein folding.</text>
</comment>
<comment type="catalytic activity">
    <reaction evidence="1">
        <text>ATP + H2O + a folded polypeptide = ADP + phosphate + an unfolded polypeptide.</text>
        <dbReference type="EC" id="5.6.1.7"/>
    </reaction>
</comment>
<comment type="subunit">
    <text evidence="1">Forms a cylinder of 14 subunits composed of two heptameric rings stacked back-to-back. Interacts with the co-chaperonin GroES.</text>
</comment>
<comment type="subcellular location">
    <subcellularLocation>
        <location evidence="1">Cytoplasm</location>
    </subcellularLocation>
</comment>
<comment type="similarity">
    <text evidence="1 2">Belongs to the chaperonin (HSP60) family.</text>
</comment>
<organism>
    <name type="scientific">Mycolicibacterium fortuitum</name>
    <name type="common">Mycobacterium fortuitum</name>
    <dbReference type="NCBI Taxonomy" id="1766"/>
    <lineage>
        <taxon>Bacteria</taxon>
        <taxon>Bacillati</taxon>
        <taxon>Actinomycetota</taxon>
        <taxon>Actinomycetes</taxon>
        <taxon>Mycobacteriales</taxon>
        <taxon>Mycobacteriaceae</taxon>
        <taxon>Mycolicibacterium</taxon>
    </lineage>
</organism>
<protein>
    <recommendedName>
        <fullName evidence="1">Chaperonin GroEL</fullName>
        <ecNumber evidence="1">5.6.1.7</ecNumber>
    </recommendedName>
    <alternativeName>
        <fullName evidence="1">60 kDa chaperonin</fullName>
    </alternativeName>
    <alternativeName>
        <fullName>65 kDa heat shock protein</fullName>
    </alternativeName>
    <alternativeName>
        <fullName evidence="1">Chaperonin-60</fullName>
        <shortName evidence="1">Cpn60</shortName>
    </alternativeName>
</protein>
<feature type="chain" id="PRO_0000063428" description="Chaperonin GroEL">
    <location>
        <begin position="1" status="less than"/>
        <end position="151" status="greater than"/>
    </location>
</feature>
<feature type="binding site" evidence="1">
    <location>
        <begin position="41"/>
        <end position="45"/>
    </location>
    <ligand>
        <name>ATP</name>
        <dbReference type="ChEBI" id="CHEBI:30616"/>
    </ligand>
</feature>
<feature type="non-terminal residue">
    <location>
        <position position="1"/>
    </location>
</feature>
<feature type="non-terminal residue">
    <location>
        <position position="151"/>
    </location>
</feature>
<reference key="1">
    <citation type="submission" date="1996-05" db="EMBL/GenBank/DDBJ databases">
        <authorList>
            <person name="Ros C."/>
            <person name="Belak K."/>
        </authorList>
    </citation>
    <scope>NUCLEOTIDE SEQUENCE [GENOMIC DNA]</scope>
    <source>
        <strain>ATCC 866</strain>
    </source>
</reference>
<reference key="2">
    <citation type="journal article" date="1995" name="Rinsho Byori">
        <title>Detection and identification of mycobacteria by PCR-RFLP method.</title>
        <authorList>
            <person name="Hidaka E."/>
            <person name="Ueno I."/>
            <person name="Kawakami Y."/>
            <person name="Furuwatari C."/>
            <person name="Furihata K."/>
            <person name="Katsuyama T."/>
        </authorList>
    </citation>
    <scope>NUCLEOTIDE SEQUENCE [GENOMIC DNA] OF 20-133</scope>
</reference>
<accession>Q49160</accession>
<accession>Q53493</accession>
<keyword id="KW-0067">ATP-binding</keyword>
<keyword id="KW-0143">Chaperone</keyword>
<keyword id="KW-0963">Cytoplasm</keyword>
<keyword id="KW-0413">Isomerase</keyword>
<keyword id="KW-0547">Nucleotide-binding</keyword>
<keyword id="KW-0346">Stress response</keyword>
<sequence length="151" mass="15827">PTITNDGVSIAKEIELEDPYEKIGAELVKEVAKKTDDVAGDGTTTATVLAQALVREGLRNVAAGANPLGLKRGIEKAVEKVTETLLKSAKEVETKEQIAATAGISAGDQSIGDLIAEAMDKVGNEGVITVEESNTFGLQLELTEGMRFDKG</sequence>